<protein>
    <recommendedName>
        <fullName evidence="1">Cytoskeleton protein RodZ</fullName>
    </recommendedName>
</protein>
<name>RODZ_SHIB3</name>
<gene>
    <name evidence="1" type="primary">rodZ</name>
    <name type="ordered locus">SbBS512_E2891</name>
</gene>
<comment type="function">
    <text evidence="1">Cytoskeletal protein that is involved in cell-shape control through regulation of the length of the long axis.</text>
</comment>
<comment type="subcellular location">
    <subcellularLocation>
        <location evidence="1">Cell inner membrane</location>
        <topology evidence="1">Single-pass type II membrane protein</topology>
    </subcellularLocation>
    <text evidence="1">Forms helical filaments along the long axis of the cell.</text>
</comment>
<comment type="domain">
    <text evidence="1">The helix-turn-helix (HTH) motif in the cytoplasmic domain of the N-terminus is involved in the formation of spirals to maintain the rigid rod shape. As this protein is anchored in the cytoplasmic membrane, the HTH motif may contribute to protein-protein interactions to form the RodZ helix, which is localized beneath the cytoplasmic membrane. The C-terminal domain may be critical for determination of the rod shape by probably interacting with enzymes required for synthesis of the peptidoglycan layer, including PBPs in the periplasm.</text>
</comment>
<comment type="similarity">
    <text evidence="1">Belongs to the RodZ family.</text>
</comment>
<feature type="chain" id="PRO_0000361862" description="Cytoskeleton protein RodZ">
    <location>
        <begin position="1"/>
        <end position="337"/>
    </location>
</feature>
<feature type="topological domain" description="Cytoplasmic" evidence="1">
    <location>
        <begin position="1"/>
        <end position="111"/>
    </location>
</feature>
<feature type="transmembrane region" description="Helical; Signal-anchor for type II membrane protein" evidence="1">
    <location>
        <begin position="112"/>
        <end position="132"/>
    </location>
</feature>
<feature type="topological domain" description="Periplasmic" evidence="1">
    <location>
        <begin position="133"/>
        <end position="337"/>
    </location>
</feature>
<feature type="domain" description="HTH cro/C1-type" evidence="1">
    <location>
        <begin position="19"/>
        <end position="71"/>
    </location>
</feature>
<feature type="DNA-binding region" description="H-T-H motif" evidence="1">
    <location>
        <begin position="30"/>
        <end position="49"/>
    </location>
</feature>
<feature type="region of interest" description="Disordered" evidence="2">
    <location>
        <begin position="145"/>
        <end position="236"/>
    </location>
</feature>
<feature type="compositionally biased region" description="Polar residues" evidence="2">
    <location>
        <begin position="145"/>
        <end position="167"/>
    </location>
</feature>
<feature type="compositionally biased region" description="Low complexity" evidence="2">
    <location>
        <begin position="168"/>
        <end position="207"/>
    </location>
</feature>
<feature type="compositionally biased region" description="Polar residues" evidence="2">
    <location>
        <begin position="208"/>
        <end position="218"/>
    </location>
</feature>
<feature type="compositionally biased region" description="Low complexity" evidence="2">
    <location>
        <begin position="219"/>
        <end position="236"/>
    </location>
</feature>
<dbReference type="EMBL" id="CP001063">
    <property type="protein sequence ID" value="ACD10363.1"/>
    <property type="molecule type" value="Genomic_DNA"/>
</dbReference>
<dbReference type="RefSeq" id="WP_001090844.1">
    <property type="nucleotide sequence ID" value="NC_010658.1"/>
</dbReference>
<dbReference type="SMR" id="B2TXU1"/>
<dbReference type="STRING" id="344609.SbBS512_E2891"/>
<dbReference type="GeneID" id="75172624"/>
<dbReference type="KEGG" id="sbc:SbBS512_E2891"/>
<dbReference type="HOGENOM" id="CLU_047530_3_1_6"/>
<dbReference type="Proteomes" id="UP000001030">
    <property type="component" value="Chromosome"/>
</dbReference>
<dbReference type="GO" id="GO:0005886">
    <property type="term" value="C:plasma membrane"/>
    <property type="evidence" value="ECO:0007669"/>
    <property type="project" value="UniProtKB-SubCell"/>
</dbReference>
<dbReference type="GO" id="GO:0003677">
    <property type="term" value="F:DNA binding"/>
    <property type="evidence" value="ECO:0007669"/>
    <property type="project" value="UniProtKB-KW"/>
</dbReference>
<dbReference type="GO" id="GO:0008360">
    <property type="term" value="P:regulation of cell shape"/>
    <property type="evidence" value="ECO:0007669"/>
    <property type="project" value="UniProtKB-UniRule"/>
</dbReference>
<dbReference type="CDD" id="cd00093">
    <property type="entry name" value="HTH_XRE"/>
    <property type="match status" value="1"/>
</dbReference>
<dbReference type="FunFam" id="1.10.260.40:FF:000014">
    <property type="entry name" value="Cytoskeleton protein RodZ"/>
    <property type="match status" value="1"/>
</dbReference>
<dbReference type="Gene3D" id="1.10.260.40">
    <property type="entry name" value="lambda repressor-like DNA-binding domains"/>
    <property type="match status" value="1"/>
</dbReference>
<dbReference type="HAMAP" id="MF_02017">
    <property type="entry name" value="RodZ"/>
    <property type="match status" value="1"/>
</dbReference>
<dbReference type="InterPro" id="IPR050400">
    <property type="entry name" value="Bact_Cytoskel_RodZ"/>
</dbReference>
<dbReference type="InterPro" id="IPR001387">
    <property type="entry name" value="Cro/C1-type_HTH"/>
</dbReference>
<dbReference type="InterPro" id="IPR010982">
    <property type="entry name" value="Lambda_DNA-bd_dom_sf"/>
</dbReference>
<dbReference type="InterPro" id="IPR023690">
    <property type="entry name" value="RodZ"/>
</dbReference>
<dbReference type="InterPro" id="IPR025194">
    <property type="entry name" value="RodZ-like_C"/>
</dbReference>
<dbReference type="NCBIfam" id="NF008109">
    <property type="entry name" value="PRK10856.1"/>
    <property type="match status" value="1"/>
</dbReference>
<dbReference type="PANTHER" id="PTHR34475">
    <property type="match status" value="1"/>
</dbReference>
<dbReference type="PANTHER" id="PTHR34475:SF1">
    <property type="entry name" value="CYTOSKELETON PROTEIN RODZ"/>
    <property type="match status" value="1"/>
</dbReference>
<dbReference type="Pfam" id="PF13413">
    <property type="entry name" value="HTH_25"/>
    <property type="match status" value="1"/>
</dbReference>
<dbReference type="Pfam" id="PF13464">
    <property type="entry name" value="RodZ_C"/>
    <property type="match status" value="1"/>
</dbReference>
<dbReference type="SMART" id="SM00530">
    <property type="entry name" value="HTH_XRE"/>
    <property type="match status" value="1"/>
</dbReference>
<dbReference type="SUPFAM" id="SSF47413">
    <property type="entry name" value="lambda repressor-like DNA-binding domains"/>
    <property type="match status" value="1"/>
</dbReference>
<dbReference type="PROSITE" id="PS50943">
    <property type="entry name" value="HTH_CROC1"/>
    <property type="match status" value="1"/>
</dbReference>
<evidence type="ECO:0000255" key="1">
    <source>
        <dbReference type="HAMAP-Rule" id="MF_02017"/>
    </source>
</evidence>
<evidence type="ECO:0000256" key="2">
    <source>
        <dbReference type="SAM" id="MobiDB-lite"/>
    </source>
</evidence>
<organism>
    <name type="scientific">Shigella boydii serotype 18 (strain CDC 3083-94 / BS512)</name>
    <dbReference type="NCBI Taxonomy" id="344609"/>
    <lineage>
        <taxon>Bacteria</taxon>
        <taxon>Pseudomonadati</taxon>
        <taxon>Pseudomonadota</taxon>
        <taxon>Gammaproteobacteria</taxon>
        <taxon>Enterobacterales</taxon>
        <taxon>Enterobacteriaceae</taxon>
        <taxon>Shigella</taxon>
    </lineage>
</organism>
<sequence>MNTEATHDQNEALTTGARLRNAREQLGLSQQAVAERLCLKVSTVRDIEEDKAPADLASTFLRGYIRSYARLVHIPEEELLPGLEKQAPLRAAKVAPMQSFSLGKRRKKRDGWLMTFTWLVLFVVIGLSGAWWWQDHKAQQEEITTMADQSSAELSSNSEQGQSVPLNTSTTTDPATTSTPPASVDTTATNTQTPAVTAPAPAVDPQQNAVVSPSQANVDTAATPAPTAATTPDGAAPLPTDQAGVTTPVADPNALVMNFTADCWLEVTDATGKKLFSGMQRKDGNLNLTGQAPYKLKIGAPAAVQIQYQGKPVDLSRFIRTNQVARLTLNAEQSPAQ</sequence>
<keyword id="KW-0997">Cell inner membrane</keyword>
<keyword id="KW-1003">Cell membrane</keyword>
<keyword id="KW-0133">Cell shape</keyword>
<keyword id="KW-0238">DNA-binding</keyword>
<keyword id="KW-0472">Membrane</keyword>
<keyword id="KW-1185">Reference proteome</keyword>
<keyword id="KW-0735">Signal-anchor</keyword>
<keyword id="KW-0812">Transmembrane</keyword>
<keyword id="KW-1133">Transmembrane helix</keyword>
<accession>B2TXU1</accession>
<proteinExistence type="inferred from homology"/>
<reference key="1">
    <citation type="submission" date="2008-05" db="EMBL/GenBank/DDBJ databases">
        <title>Complete sequence of Shigella boydii serotype 18 strain BS512.</title>
        <authorList>
            <person name="Rasko D.A."/>
            <person name="Rosovitz M."/>
            <person name="Maurelli A.T."/>
            <person name="Myers G."/>
            <person name="Seshadri R."/>
            <person name="Cer R."/>
            <person name="Jiang L."/>
            <person name="Ravel J."/>
            <person name="Sebastian Y."/>
        </authorList>
    </citation>
    <scope>NUCLEOTIDE SEQUENCE [LARGE SCALE GENOMIC DNA]</scope>
    <source>
        <strain>CDC 3083-94 / BS512</strain>
    </source>
</reference>